<proteinExistence type="evidence at transcript level"/>
<accession>Q6GPM4</accession>
<accession>Q9W6Z1</accession>
<comment type="subunit">
    <text evidence="2">Component of the mitochondrial ribosome large subunit (39S) which comprises a 16S rRNA and about 50 distinct proteins.</text>
</comment>
<comment type="subcellular location">
    <subcellularLocation>
        <location evidence="2">Mitochondrion</location>
    </subcellularLocation>
</comment>
<comment type="tissue specificity">
    <text evidence="3">Ubiquitous. Expressed at greater levels in the kidney, adipose tissue, muscle and liver than the brain, heart, ovary and lung.</text>
</comment>
<comment type="developmental stage">
    <text>Expressed at relatively constant levels throughout embryogenesis.</text>
</comment>
<comment type="similarity">
    <text evidence="4">Belongs to the universal ribosomal protein uL24 family.</text>
</comment>
<comment type="sequence caution" evidence="4">
    <conflict type="frameshift">
        <sequence resource="EMBL-CDS" id="CAB40554"/>
    </conflict>
</comment>
<keyword id="KW-0496">Mitochondrion</keyword>
<keyword id="KW-1185">Reference proteome</keyword>
<keyword id="KW-0687">Ribonucleoprotein</keyword>
<keyword id="KW-0689">Ribosomal protein</keyword>
<keyword id="KW-0809">Transit peptide</keyword>
<name>RM24_XENLA</name>
<gene>
    <name type="primary">mrpl24</name>
</gene>
<evidence type="ECO:0000250" key="1"/>
<evidence type="ECO:0000250" key="2">
    <source>
        <dbReference type="UniProtKB" id="Q96A35"/>
    </source>
</evidence>
<evidence type="ECO:0000269" key="3">
    <source>
    </source>
</evidence>
<evidence type="ECO:0000305" key="4"/>
<feature type="transit peptide" description="Mitochondrion" evidence="1">
    <location>
        <begin position="1"/>
        <end position="9"/>
    </location>
</feature>
<feature type="chain" id="PRO_0000270492" description="Large ribosomal subunit protein uL24m">
    <location>
        <begin position="10"/>
        <end position="216"/>
    </location>
</feature>
<feature type="domain" description="KOW">
    <location>
        <begin position="56"/>
        <end position="89"/>
    </location>
</feature>
<feature type="sequence conflict" description="In Ref. 1; CAB40554." evidence="4" ref="1">
    <original>G</original>
    <variation>A</variation>
    <location>
        <position position="113"/>
    </location>
</feature>
<organism>
    <name type="scientific">Xenopus laevis</name>
    <name type="common">African clawed frog</name>
    <dbReference type="NCBI Taxonomy" id="8355"/>
    <lineage>
        <taxon>Eukaryota</taxon>
        <taxon>Metazoa</taxon>
        <taxon>Chordata</taxon>
        <taxon>Craniata</taxon>
        <taxon>Vertebrata</taxon>
        <taxon>Euteleostomi</taxon>
        <taxon>Amphibia</taxon>
        <taxon>Batrachia</taxon>
        <taxon>Anura</taxon>
        <taxon>Pipoidea</taxon>
        <taxon>Pipidae</taxon>
        <taxon>Xenopodinae</taxon>
        <taxon>Xenopus</taxon>
        <taxon>Xenopus</taxon>
    </lineage>
</organism>
<reference key="1">
    <citation type="journal article" date="1999" name="Gene">
        <title>Sequence and expression analysis of a novel Xenopus laevis cDNA that encodes a protein similar to bacterial and chloroplast ribosomal protein L24.</title>
        <authorList>
            <person name="Kousteni S."/>
            <person name="Tura-Kochar F."/>
            <person name="Ramji D.P."/>
        </authorList>
    </citation>
    <scope>NUCLEOTIDE SEQUENCE [MRNA]</scope>
    <scope>TISSUE SPECIFICITY</scope>
</reference>
<reference key="2">
    <citation type="submission" date="2004-06" db="EMBL/GenBank/DDBJ databases">
        <authorList>
            <consortium name="NIH - Xenopus Gene Collection (XGC) project"/>
        </authorList>
    </citation>
    <scope>NUCLEOTIDE SEQUENCE [LARGE SCALE MRNA]</scope>
    <source>
        <tissue>Eye</tissue>
    </source>
</reference>
<sequence length="216" mass="25171">MRLTLLLEMAAKLKLPHDYRFGMSRPSTLAAKRRNPPGKRRSKVFVEPVSKEEWQYFRGDTVEVLHGKDAGKQGKVTQVVRARNWVVVDGLNTHFRYVGRTDEYRGTYVASEGPLLLNQVSLIDPTDRKPTEIEWRYTEEGERVRVSARSGRIIPKPVLQRRDGIIPEQWKDGPKDTSVEDALERTYVPSLKTFQEEIMEKTGIAENRRHRKSYWY</sequence>
<dbReference type="EMBL" id="Y17113">
    <property type="protein sequence ID" value="CAB40554.1"/>
    <property type="status" value="ALT_FRAME"/>
    <property type="molecule type" value="mRNA"/>
</dbReference>
<dbReference type="EMBL" id="BC073090">
    <property type="protein sequence ID" value="AAH73090.1"/>
    <property type="molecule type" value="mRNA"/>
</dbReference>
<dbReference type="RefSeq" id="NP_001081153.1">
    <property type="nucleotide sequence ID" value="NM_001087684.1"/>
</dbReference>
<dbReference type="SMR" id="Q6GPM4"/>
<dbReference type="GeneID" id="394416"/>
<dbReference type="KEGG" id="xla:394416"/>
<dbReference type="AGR" id="Xenbase:XB-GENE-992392"/>
<dbReference type="CTD" id="394416"/>
<dbReference type="Xenbase" id="XB-GENE-992392">
    <property type="gene designation" value="mrpl24.L"/>
</dbReference>
<dbReference type="OrthoDB" id="359154at2759"/>
<dbReference type="Proteomes" id="UP000186698">
    <property type="component" value="Chromosome 8L"/>
</dbReference>
<dbReference type="Bgee" id="394416">
    <property type="expression patterns" value="Expressed in oocyte and 19 other cell types or tissues"/>
</dbReference>
<dbReference type="GO" id="GO:0005762">
    <property type="term" value="C:mitochondrial large ribosomal subunit"/>
    <property type="evidence" value="ECO:0000250"/>
    <property type="project" value="UniProtKB"/>
</dbReference>
<dbReference type="GO" id="GO:0005739">
    <property type="term" value="C:mitochondrion"/>
    <property type="evidence" value="ECO:0000318"/>
    <property type="project" value="GO_Central"/>
</dbReference>
<dbReference type="GO" id="GO:0003723">
    <property type="term" value="F:RNA binding"/>
    <property type="evidence" value="ECO:0007669"/>
    <property type="project" value="InterPro"/>
</dbReference>
<dbReference type="GO" id="GO:0003735">
    <property type="term" value="F:structural constituent of ribosome"/>
    <property type="evidence" value="ECO:0007669"/>
    <property type="project" value="InterPro"/>
</dbReference>
<dbReference type="GO" id="GO:0006412">
    <property type="term" value="P:translation"/>
    <property type="evidence" value="ECO:0000318"/>
    <property type="project" value="GO_Central"/>
</dbReference>
<dbReference type="CDD" id="cd06089">
    <property type="entry name" value="KOW_RPL26"/>
    <property type="match status" value="1"/>
</dbReference>
<dbReference type="FunFam" id="2.30.30.30:FF:000032">
    <property type="entry name" value="39S ribosomal protein L24, mitochondrial"/>
    <property type="match status" value="1"/>
</dbReference>
<dbReference type="Gene3D" id="2.30.30.30">
    <property type="match status" value="1"/>
</dbReference>
<dbReference type="HAMAP" id="MF_01326_B">
    <property type="entry name" value="Ribosomal_uL24_B"/>
    <property type="match status" value="1"/>
</dbReference>
<dbReference type="InterPro" id="IPR005824">
    <property type="entry name" value="KOW"/>
</dbReference>
<dbReference type="InterPro" id="IPR014722">
    <property type="entry name" value="Rib_uL2_dom2"/>
</dbReference>
<dbReference type="InterPro" id="IPR003256">
    <property type="entry name" value="Ribosomal_uL24"/>
</dbReference>
<dbReference type="InterPro" id="IPR005825">
    <property type="entry name" value="Ribosomal_uL24_CS"/>
</dbReference>
<dbReference type="InterPro" id="IPR041988">
    <property type="entry name" value="Ribosomal_uL24_KOW"/>
</dbReference>
<dbReference type="InterPro" id="IPR008991">
    <property type="entry name" value="Translation_prot_SH3-like_sf"/>
</dbReference>
<dbReference type="NCBIfam" id="TIGR01079">
    <property type="entry name" value="rplX_bact"/>
    <property type="match status" value="1"/>
</dbReference>
<dbReference type="PANTHER" id="PTHR12903">
    <property type="entry name" value="MITOCHONDRIAL RIBOSOMAL PROTEIN L24"/>
    <property type="match status" value="1"/>
</dbReference>
<dbReference type="Pfam" id="PF00467">
    <property type="entry name" value="KOW"/>
    <property type="match status" value="1"/>
</dbReference>
<dbReference type="Pfam" id="PF17136">
    <property type="entry name" value="ribosomal_L24"/>
    <property type="match status" value="1"/>
</dbReference>
<dbReference type="SMART" id="SM00739">
    <property type="entry name" value="KOW"/>
    <property type="match status" value="1"/>
</dbReference>
<dbReference type="SUPFAM" id="SSF50104">
    <property type="entry name" value="Translation proteins SH3-like domain"/>
    <property type="match status" value="1"/>
</dbReference>
<dbReference type="PROSITE" id="PS01108">
    <property type="entry name" value="RIBOSOMAL_L24"/>
    <property type="match status" value="1"/>
</dbReference>
<protein>
    <recommendedName>
        <fullName evidence="4">Large ribosomal subunit protein uL24m</fullName>
    </recommendedName>
    <alternativeName>
        <fullName evidence="4">39S ribosomal protein L24, mitochondrial</fullName>
        <shortName>L24mt</shortName>
        <shortName>MRP-L24</shortName>
    </alternativeName>
</protein>